<dbReference type="EC" id="2.3.1.6"/>
<dbReference type="EMBL" id="AY044155">
    <property type="protein sequence ID" value="AAK94673.1"/>
    <property type="molecule type" value="mRNA"/>
</dbReference>
<dbReference type="RefSeq" id="NP_989941.1">
    <property type="nucleotide sequence ID" value="NM_204610.1"/>
</dbReference>
<dbReference type="SMR" id="Q90YJ9"/>
<dbReference type="FunCoup" id="Q90YJ9">
    <property type="interactions" value="216"/>
</dbReference>
<dbReference type="STRING" id="9031.ENSGALP00000003594"/>
<dbReference type="BindingDB" id="Q90YJ9"/>
<dbReference type="ChEMBL" id="CHEMBL2944"/>
<dbReference type="PaxDb" id="9031-ENSGALP00000003594"/>
<dbReference type="GeneID" id="395314"/>
<dbReference type="KEGG" id="gga:395314"/>
<dbReference type="CTD" id="1103"/>
<dbReference type="VEuPathDB" id="HostDB:geneid_395314"/>
<dbReference type="eggNOG" id="KOG3717">
    <property type="taxonomic scope" value="Eukaryota"/>
</dbReference>
<dbReference type="InParanoid" id="Q90YJ9"/>
<dbReference type="OrthoDB" id="240216at2759"/>
<dbReference type="PhylomeDB" id="Q90YJ9"/>
<dbReference type="PRO" id="PR:Q90YJ9"/>
<dbReference type="Proteomes" id="UP000000539">
    <property type="component" value="Unassembled WGS sequence"/>
</dbReference>
<dbReference type="GO" id="GO:0005737">
    <property type="term" value="C:cytoplasm"/>
    <property type="evidence" value="ECO:0000318"/>
    <property type="project" value="GO_Central"/>
</dbReference>
<dbReference type="GO" id="GO:0043005">
    <property type="term" value="C:neuron projection"/>
    <property type="evidence" value="ECO:0000318"/>
    <property type="project" value="GO_Central"/>
</dbReference>
<dbReference type="GO" id="GO:0045202">
    <property type="term" value="C:synapse"/>
    <property type="evidence" value="ECO:0007669"/>
    <property type="project" value="GOC"/>
</dbReference>
<dbReference type="GO" id="GO:0004102">
    <property type="term" value="F:choline O-acetyltransferase activity"/>
    <property type="evidence" value="ECO:0000314"/>
    <property type="project" value="AgBase"/>
</dbReference>
<dbReference type="GO" id="GO:0008292">
    <property type="term" value="P:acetylcholine biosynthetic process"/>
    <property type="evidence" value="ECO:0000318"/>
    <property type="project" value="GO_Central"/>
</dbReference>
<dbReference type="GO" id="GO:0007274">
    <property type="term" value="P:neuromuscular synaptic transmission"/>
    <property type="evidence" value="ECO:0000318"/>
    <property type="project" value="GO_Central"/>
</dbReference>
<dbReference type="GO" id="GO:0060416">
    <property type="term" value="P:response to growth hormone"/>
    <property type="evidence" value="ECO:0000315"/>
    <property type="project" value="AgBase"/>
</dbReference>
<dbReference type="FunFam" id="3.30.559.10:FF:000001">
    <property type="entry name" value="Carnitine O-acetyltransferase"/>
    <property type="match status" value="1"/>
</dbReference>
<dbReference type="FunFam" id="3.30.559.70:FF:000004">
    <property type="entry name" value="Choline O-acetyltransferase"/>
    <property type="match status" value="1"/>
</dbReference>
<dbReference type="Gene3D" id="3.30.559.10">
    <property type="entry name" value="Chloramphenicol acetyltransferase-like domain"/>
    <property type="match status" value="1"/>
</dbReference>
<dbReference type="Gene3D" id="3.30.559.70">
    <property type="entry name" value="Choline/Carnitine o-acyltransferase, domain 2"/>
    <property type="match status" value="1"/>
</dbReference>
<dbReference type="InterPro" id="IPR000542">
    <property type="entry name" value="Carn_acyl_trans"/>
</dbReference>
<dbReference type="InterPro" id="IPR023213">
    <property type="entry name" value="CAT-like_dom_sf"/>
</dbReference>
<dbReference type="InterPro" id="IPR039551">
    <property type="entry name" value="Cho/carn_acyl_trans"/>
</dbReference>
<dbReference type="InterPro" id="IPR042231">
    <property type="entry name" value="Cho/carn_acyl_trans_2"/>
</dbReference>
<dbReference type="PANTHER" id="PTHR22589">
    <property type="entry name" value="CARNITINE O-ACYLTRANSFERASE"/>
    <property type="match status" value="1"/>
</dbReference>
<dbReference type="PANTHER" id="PTHR22589:SF14">
    <property type="entry name" value="CHOLINE O-ACETYLTRANSFERASE"/>
    <property type="match status" value="1"/>
</dbReference>
<dbReference type="Pfam" id="PF00755">
    <property type="entry name" value="Carn_acyltransf"/>
    <property type="match status" value="1"/>
</dbReference>
<dbReference type="SUPFAM" id="SSF52777">
    <property type="entry name" value="CoA-dependent acyltransferases"/>
    <property type="match status" value="2"/>
</dbReference>
<dbReference type="PROSITE" id="PS00440">
    <property type="entry name" value="ACYLTRANSF_C_2"/>
    <property type="match status" value="1"/>
</dbReference>
<accession>Q90YJ9</accession>
<reference key="1">
    <citation type="journal article" date="2004" name="Brain Res. Mol. Brain Res.">
        <title>Cloning of chicken choline acetyltransferase and its expression in early embryonic retina.</title>
        <authorList>
            <person name="Mukherjee R.S."/>
            <person name="Hausman R.E."/>
        </authorList>
    </citation>
    <scope>NUCLEOTIDE SEQUENCE [MRNA]</scope>
    <scope>TISSUE SPECIFICITY</scope>
    <source>
        <tissue>Brain</tissue>
    </source>
</reference>
<protein>
    <recommendedName>
        <fullName>Choline O-acetyltransferase</fullName>
        <shortName>CHOACTase</shortName>
        <shortName>ChAT</shortName>
        <shortName>Choline acetylase</shortName>
        <ecNumber>2.3.1.6</ecNumber>
    </recommendedName>
</protein>
<organism>
    <name type="scientific">Gallus gallus</name>
    <name type="common">Chicken</name>
    <dbReference type="NCBI Taxonomy" id="9031"/>
    <lineage>
        <taxon>Eukaryota</taxon>
        <taxon>Metazoa</taxon>
        <taxon>Chordata</taxon>
        <taxon>Craniata</taxon>
        <taxon>Vertebrata</taxon>
        <taxon>Euteleostomi</taxon>
        <taxon>Archelosauria</taxon>
        <taxon>Archosauria</taxon>
        <taxon>Dinosauria</taxon>
        <taxon>Saurischia</taxon>
        <taxon>Theropoda</taxon>
        <taxon>Coelurosauria</taxon>
        <taxon>Aves</taxon>
        <taxon>Neognathae</taxon>
        <taxon>Galloanserae</taxon>
        <taxon>Galliformes</taxon>
        <taxon>Phasianidae</taxon>
        <taxon>Phasianinae</taxon>
        <taxon>Gallus</taxon>
    </lineage>
</organism>
<proteinExistence type="evidence at transcript level"/>
<evidence type="ECO:0000250" key="1"/>
<evidence type="ECO:0000256" key="2">
    <source>
        <dbReference type="SAM" id="MobiDB-lite"/>
    </source>
</evidence>
<evidence type="ECO:0000269" key="3">
    <source>
    </source>
</evidence>
<evidence type="ECO:0000305" key="4"/>
<gene>
    <name type="primary">CHAT</name>
</gene>
<sequence length="640" mass="72623">MPDLEKDMQKKEKDSRSKDEPAVPKLPVPPLQQTLQMYLQCMKHLVPEEQFRKTKSIVEQFGVAGGLGESLQLILEERREETTNWVFNYWLDDMYLNNRLALPVNSSPAIIFARQNFKDVNDQLRFAANLISGVQDYKALLDSHALPVDFARGQLSGQPLCMKQYYGLFSSYRLPGHTKDTLVAQKSCVMPEPEHIIVACNNQLFVLDVGINFRRLSEGDLFTQLRKIAKMAENEEEMLPPIGLLTTDGRTEWAEARTILMKDSTNRDSLDMIERCICLVCLDGTSGVELNDTNMALQLLHGGGYHKNGANRWYDKPMQFVVGRDGVCGTVCEHSPFDGIVLVQCTEHLLKHMKESSKKLLRADSVSELPAPRRLRWKCSPEIQAHLASSAEKLQRIVKNLDFIAYKFVNYGKEFIKKQKTSPDAYIQVALQLAFYRCHRRLVPTYESASIRRFDEGRVDNIRSATAEAFAFVKAMIDDKPALSDSEKMQRFKDAIAAQTNYTILAITGMAIDNHLLGLREVAREHFKELPEIFTDETYLTSNRFILSTSQVPTPMEMFCCYGPVVPNGYGACYNPQPEHILFCISSFKDCKETSSDMLAKAVEESLLEIRDLCNKCSSSTAKSLAKQEEATQLRSDRKL</sequence>
<comment type="function">
    <text evidence="1">Catalyzes the reversible synthesis of acetylcholine (ACh) from acetyl CoA and choline at cholinergic synapses.</text>
</comment>
<comment type="catalytic activity">
    <reaction>
        <text>choline + acetyl-CoA = acetylcholine + CoA</text>
        <dbReference type="Rhea" id="RHEA:18821"/>
        <dbReference type="ChEBI" id="CHEBI:15354"/>
        <dbReference type="ChEBI" id="CHEBI:15355"/>
        <dbReference type="ChEBI" id="CHEBI:57287"/>
        <dbReference type="ChEBI" id="CHEBI:57288"/>
        <dbReference type="EC" id="2.3.1.6"/>
    </reaction>
</comment>
<comment type="tissue specificity">
    <text evidence="3">Detected in brain and in embryonic retina.</text>
</comment>
<comment type="similarity">
    <text evidence="4">Belongs to the carnitine/choline acetyltransferase family.</text>
</comment>
<name>CLAT_CHICK</name>
<keyword id="KW-0012">Acyltransferase</keyword>
<keyword id="KW-0530">Neurotransmitter biosynthesis</keyword>
<keyword id="KW-1185">Reference proteome</keyword>
<keyword id="KW-0808">Transferase</keyword>
<feature type="chain" id="PRO_0000351549" description="Choline O-acetyltransferase">
    <location>
        <begin position="1"/>
        <end position="640"/>
    </location>
</feature>
<feature type="region of interest" description="Disordered" evidence="2">
    <location>
        <begin position="1"/>
        <end position="28"/>
    </location>
</feature>
<feature type="compositionally biased region" description="Basic and acidic residues" evidence="2">
    <location>
        <begin position="1"/>
        <end position="22"/>
    </location>
</feature>
<feature type="active site" description="Proton acceptor" evidence="1">
    <location>
        <position position="334"/>
    </location>
</feature>
<feature type="binding site" evidence="1">
    <location>
        <begin position="412"/>
        <end position="424"/>
    </location>
    <ligand>
        <name>CoA</name>
        <dbReference type="ChEBI" id="CHEBI:57287"/>
    </ligand>
</feature>
<feature type="binding site" evidence="1">
    <location>
        <position position="450"/>
    </location>
    <ligand>
        <name>CoA</name>
        <dbReference type="ChEBI" id="CHEBI:57287"/>
    </ligand>
</feature>
<feature type="binding site" evidence="1">
    <location>
        <position position="551"/>
    </location>
    <ligand>
        <name>CoA</name>
        <dbReference type="ChEBI" id="CHEBI:57287"/>
    </ligand>
</feature>